<reference key="1">
    <citation type="journal article" date="2005" name="Genome Res.">
        <title>Comparative and functional genomic analyses of the pathogenicity of phytopathogen Xanthomonas campestris pv. campestris.</title>
        <authorList>
            <person name="Qian W."/>
            <person name="Jia Y."/>
            <person name="Ren S.-X."/>
            <person name="He Y.-Q."/>
            <person name="Feng J.-X."/>
            <person name="Lu L.-F."/>
            <person name="Sun Q."/>
            <person name="Ying G."/>
            <person name="Tang D.-J."/>
            <person name="Tang H."/>
            <person name="Wu W."/>
            <person name="Hao P."/>
            <person name="Wang L."/>
            <person name="Jiang B.-L."/>
            <person name="Zeng S."/>
            <person name="Gu W.-Y."/>
            <person name="Lu G."/>
            <person name="Rong L."/>
            <person name="Tian Y."/>
            <person name="Yao Z."/>
            <person name="Fu G."/>
            <person name="Chen B."/>
            <person name="Fang R."/>
            <person name="Qiang B."/>
            <person name="Chen Z."/>
            <person name="Zhao G.-P."/>
            <person name="Tang J.-L."/>
            <person name="He C."/>
        </authorList>
    </citation>
    <scope>NUCLEOTIDE SEQUENCE [LARGE SCALE GENOMIC DNA]</scope>
    <source>
        <strain>8004</strain>
    </source>
</reference>
<protein>
    <recommendedName>
        <fullName evidence="1">Large ribosomal subunit protein bL35</fullName>
    </recommendedName>
    <alternativeName>
        <fullName evidence="2">50S ribosomal protein L35</fullName>
    </alternativeName>
</protein>
<dbReference type="EMBL" id="CP000050">
    <property type="protein sequence ID" value="AAY48718.1"/>
    <property type="molecule type" value="Genomic_DNA"/>
</dbReference>
<dbReference type="RefSeq" id="WP_002811096.1">
    <property type="nucleotide sequence ID" value="NZ_CP155948.1"/>
</dbReference>
<dbReference type="SMR" id="Q4UW55"/>
<dbReference type="GeneID" id="98193709"/>
<dbReference type="KEGG" id="xcb:XC_1652"/>
<dbReference type="HOGENOM" id="CLU_169643_4_3_6"/>
<dbReference type="Proteomes" id="UP000000420">
    <property type="component" value="Chromosome"/>
</dbReference>
<dbReference type="GO" id="GO:0022625">
    <property type="term" value="C:cytosolic large ribosomal subunit"/>
    <property type="evidence" value="ECO:0007669"/>
    <property type="project" value="TreeGrafter"/>
</dbReference>
<dbReference type="GO" id="GO:0003735">
    <property type="term" value="F:structural constituent of ribosome"/>
    <property type="evidence" value="ECO:0007669"/>
    <property type="project" value="InterPro"/>
</dbReference>
<dbReference type="GO" id="GO:0006412">
    <property type="term" value="P:translation"/>
    <property type="evidence" value="ECO:0007669"/>
    <property type="project" value="UniProtKB-UniRule"/>
</dbReference>
<dbReference type="FunFam" id="4.10.410.60:FF:000001">
    <property type="entry name" value="50S ribosomal protein L35"/>
    <property type="match status" value="1"/>
</dbReference>
<dbReference type="Gene3D" id="4.10.410.60">
    <property type="match status" value="1"/>
</dbReference>
<dbReference type="HAMAP" id="MF_00514">
    <property type="entry name" value="Ribosomal_bL35"/>
    <property type="match status" value="1"/>
</dbReference>
<dbReference type="InterPro" id="IPR001706">
    <property type="entry name" value="Ribosomal_bL35"/>
</dbReference>
<dbReference type="InterPro" id="IPR021137">
    <property type="entry name" value="Ribosomal_bL35-like"/>
</dbReference>
<dbReference type="InterPro" id="IPR018265">
    <property type="entry name" value="Ribosomal_bL35_CS"/>
</dbReference>
<dbReference type="InterPro" id="IPR037229">
    <property type="entry name" value="Ribosomal_bL35_sf"/>
</dbReference>
<dbReference type="NCBIfam" id="TIGR00001">
    <property type="entry name" value="rpmI_bact"/>
    <property type="match status" value="1"/>
</dbReference>
<dbReference type="PANTHER" id="PTHR33343">
    <property type="entry name" value="54S RIBOSOMAL PROTEIN BL35M"/>
    <property type="match status" value="1"/>
</dbReference>
<dbReference type="PANTHER" id="PTHR33343:SF1">
    <property type="entry name" value="LARGE RIBOSOMAL SUBUNIT PROTEIN BL35M"/>
    <property type="match status" value="1"/>
</dbReference>
<dbReference type="Pfam" id="PF01632">
    <property type="entry name" value="Ribosomal_L35p"/>
    <property type="match status" value="1"/>
</dbReference>
<dbReference type="PRINTS" id="PR00064">
    <property type="entry name" value="RIBOSOMALL35"/>
</dbReference>
<dbReference type="SUPFAM" id="SSF143034">
    <property type="entry name" value="L35p-like"/>
    <property type="match status" value="1"/>
</dbReference>
<dbReference type="PROSITE" id="PS00936">
    <property type="entry name" value="RIBOSOMAL_L35"/>
    <property type="match status" value="1"/>
</dbReference>
<gene>
    <name evidence="1" type="primary">rpmI</name>
    <name type="ordered locus">XC_1652</name>
</gene>
<comment type="similarity">
    <text evidence="1">Belongs to the bacterial ribosomal protein bL35 family.</text>
</comment>
<evidence type="ECO:0000255" key="1">
    <source>
        <dbReference type="HAMAP-Rule" id="MF_00514"/>
    </source>
</evidence>
<evidence type="ECO:0000305" key="2"/>
<accession>Q4UW55</accession>
<proteinExistence type="inferred from homology"/>
<feature type="chain" id="PRO_0000258783" description="Large ribosomal subunit protein bL35">
    <location>
        <begin position="1"/>
        <end position="65"/>
    </location>
</feature>
<keyword id="KW-0687">Ribonucleoprotein</keyword>
<keyword id="KW-0689">Ribosomal protein</keyword>
<sequence>MPKIKTNRAAAKRFRKTASGKYKCGHANRSHILTKKATKRKRNLRQTNHVRAEDAGRLDRMLPYL</sequence>
<organism>
    <name type="scientific">Xanthomonas campestris pv. campestris (strain 8004)</name>
    <dbReference type="NCBI Taxonomy" id="314565"/>
    <lineage>
        <taxon>Bacteria</taxon>
        <taxon>Pseudomonadati</taxon>
        <taxon>Pseudomonadota</taxon>
        <taxon>Gammaproteobacteria</taxon>
        <taxon>Lysobacterales</taxon>
        <taxon>Lysobacteraceae</taxon>
        <taxon>Xanthomonas</taxon>
    </lineage>
</organism>
<name>RL35_XANC8</name>